<sequence length="394" mass="42223">MPMLQNVTILGATGTIGLNTLDVISRHPGRYRVFALTANSRVDELAELCLQHRPRYAVMLDSGAAEKLQQKLKGLETQVLSGLAALEEVAAHPEAHVVMAAIVGAAGLKPAMAAAYAGKRILLANKETLVMAGKLFMQAVEEGGATLLPIDSEHNAIFQVMPPARLSALADGGIRRILLTASGGPFRKSSFAELMAVTPAQALNHPNWVMGPKITIDSATLMNKGLEVIEAHWLFNAPADKIEVVVHPQSVIHSMVEYIDGSVLAQMGNPDMRTPIAYGLGYPERLKAGVNALDLFKVGRLDFEAPDTARFPCLRLAFDALRHGGTAPAILNAANEVAVDAFLNGNIGFQDIPRLIEAVLTAMDIEAVTSISQLIEVDALARAHALEWRQLEAC</sequence>
<evidence type="ECO:0000255" key="1">
    <source>
        <dbReference type="HAMAP-Rule" id="MF_00183"/>
    </source>
</evidence>
<dbReference type="EC" id="1.1.1.267" evidence="1"/>
<dbReference type="EMBL" id="CP000284">
    <property type="protein sequence ID" value="ABE49792.1"/>
    <property type="molecule type" value="Genomic_DNA"/>
</dbReference>
<dbReference type="RefSeq" id="WP_011479746.1">
    <property type="nucleotide sequence ID" value="NC_007947.1"/>
</dbReference>
<dbReference type="SMR" id="Q1H145"/>
<dbReference type="STRING" id="265072.Mfla_1524"/>
<dbReference type="KEGG" id="mfa:Mfla_1524"/>
<dbReference type="eggNOG" id="COG0743">
    <property type="taxonomic scope" value="Bacteria"/>
</dbReference>
<dbReference type="HOGENOM" id="CLU_035714_4_0_4"/>
<dbReference type="OrthoDB" id="9806546at2"/>
<dbReference type="UniPathway" id="UPA00056">
    <property type="reaction ID" value="UER00092"/>
</dbReference>
<dbReference type="Proteomes" id="UP000002440">
    <property type="component" value="Chromosome"/>
</dbReference>
<dbReference type="GO" id="GO:0030604">
    <property type="term" value="F:1-deoxy-D-xylulose-5-phosphate reductoisomerase activity"/>
    <property type="evidence" value="ECO:0007669"/>
    <property type="project" value="UniProtKB-UniRule"/>
</dbReference>
<dbReference type="GO" id="GO:0030145">
    <property type="term" value="F:manganese ion binding"/>
    <property type="evidence" value="ECO:0007669"/>
    <property type="project" value="TreeGrafter"/>
</dbReference>
<dbReference type="GO" id="GO:0070402">
    <property type="term" value="F:NADPH binding"/>
    <property type="evidence" value="ECO:0007669"/>
    <property type="project" value="InterPro"/>
</dbReference>
<dbReference type="GO" id="GO:0051484">
    <property type="term" value="P:isopentenyl diphosphate biosynthetic process, methylerythritol 4-phosphate pathway involved in terpenoid biosynthetic process"/>
    <property type="evidence" value="ECO:0007669"/>
    <property type="project" value="TreeGrafter"/>
</dbReference>
<dbReference type="FunFam" id="3.40.50.720:FF:000045">
    <property type="entry name" value="1-deoxy-D-xylulose 5-phosphate reductoisomerase"/>
    <property type="match status" value="1"/>
</dbReference>
<dbReference type="Gene3D" id="1.10.1740.10">
    <property type="match status" value="1"/>
</dbReference>
<dbReference type="Gene3D" id="3.40.50.720">
    <property type="entry name" value="NAD(P)-binding Rossmann-like Domain"/>
    <property type="match status" value="1"/>
</dbReference>
<dbReference type="HAMAP" id="MF_00183">
    <property type="entry name" value="DXP_reductoisom"/>
    <property type="match status" value="1"/>
</dbReference>
<dbReference type="InterPro" id="IPR003821">
    <property type="entry name" value="DXP_reductoisomerase"/>
</dbReference>
<dbReference type="InterPro" id="IPR013644">
    <property type="entry name" value="DXP_reductoisomerase_C"/>
</dbReference>
<dbReference type="InterPro" id="IPR013512">
    <property type="entry name" value="DXP_reductoisomerase_N"/>
</dbReference>
<dbReference type="InterPro" id="IPR026877">
    <property type="entry name" value="DXPR_C"/>
</dbReference>
<dbReference type="InterPro" id="IPR036169">
    <property type="entry name" value="DXPR_C_sf"/>
</dbReference>
<dbReference type="InterPro" id="IPR036291">
    <property type="entry name" value="NAD(P)-bd_dom_sf"/>
</dbReference>
<dbReference type="NCBIfam" id="TIGR00243">
    <property type="entry name" value="Dxr"/>
    <property type="match status" value="1"/>
</dbReference>
<dbReference type="NCBIfam" id="NF003938">
    <property type="entry name" value="PRK05447.1-1"/>
    <property type="match status" value="1"/>
</dbReference>
<dbReference type="NCBIfam" id="NF009114">
    <property type="entry name" value="PRK12464.1"/>
    <property type="match status" value="1"/>
</dbReference>
<dbReference type="PANTHER" id="PTHR30525">
    <property type="entry name" value="1-DEOXY-D-XYLULOSE 5-PHOSPHATE REDUCTOISOMERASE"/>
    <property type="match status" value="1"/>
</dbReference>
<dbReference type="PANTHER" id="PTHR30525:SF0">
    <property type="entry name" value="1-DEOXY-D-XYLULOSE 5-PHOSPHATE REDUCTOISOMERASE, CHLOROPLASTIC"/>
    <property type="match status" value="1"/>
</dbReference>
<dbReference type="Pfam" id="PF08436">
    <property type="entry name" value="DXP_redisom_C"/>
    <property type="match status" value="1"/>
</dbReference>
<dbReference type="Pfam" id="PF02670">
    <property type="entry name" value="DXP_reductoisom"/>
    <property type="match status" value="1"/>
</dbReference>
<dbReference type="Pfam" id="PF13288">
    <property type="entry name" value="DXPR_C"/>
    <property type="match status" value="1"/>
</dbReference>
<dbReference type="PIRSF" id="PIRSF006205">
    <property type="entry name" value="Dxp_reductismrs"/>
    <property type="match status" value="1"/>
</dbReference>
<dbReference type="SUPFAM" id="SSF69055">
    <property type="entry name" value="1-deoxy-D-xylulose-5-phosphate reductoisomerase, C-terminal domain"/>
    <property type="match status" value="1"/>
</dbReference>
<dbReference type="SUPFAM" id="SSF55347">
    <property type="entry name" value="Glyceraldehyde-3-phosphate dehydrogenase-like, C-terminal domain"/>
    <property type="match status" value="1"/>
</dbReference>
<dbReference type="SUPFAM" id="SSF51735">
    <property type="entry name" value="NAD(P)-binding Rossmann-fold domains"/>
    <property type="match status" value="1"/>
</dbReference>
<organism>
    <name type="scientific">Methylobacillus flagellatus (strain ATCC 51484 / DSM 6875 / VKM B-1610 / KT)</name>
    <dbReference type="NCBI Taxonomy" id="265072"/>
    <lineage>
        <taxon>Bacteria</taxon>
        <taxon>Pseudomonadati</taxon>
        <taxon>Pseudomonadota</taxon>
        <taxon>Betaproteobacteria</taxon>
        <taxon>Nitrosomonadales</taxon>
        <taxon>Methylophilaceae</taxon>
        <taxon>Methylobacillus</taxon>
    </lineage>
</organism>
<feature type="chain" id="PRO_1000020275" description="1-deoxy-D-xylulose 5-phosphate reductoisomerase">
    <location>
        <begin position="1"/>
        <end position="394"/>
    </location>
</feature>
<feature type="binding site" evidence="1">
    <location>
        <position position="13"/>
    </location>
    <ligand>
        <name>NADPH</name>
        <dbReference type="ChEBI" id="CHEBI:57783"/>
    </ligand>
</feature>
<feature type="binding site" evidence="1">
    <location>
        <position position="14"/>
    </location>
    <ligand>
        <name>NADPH</name>
        <dbReference type="ChEBI" id="CHEBI:57783"/>
    </ligand>
</feature>
<feature type="binding site" evidence="1">
    <location>
        <position position="15"/>
    </location>
    <ligand>
        <name>NADPH</name>
        <dbReference type="ChEBI" id="CHEBI:57783"/>
    </ligand>
</feature>
<feature type="binding site" evidence="1">
    <location>
        <position position="16"/>
    </location>
    <ligand>
        <name>NADPH</name>
        <dbReference type="ChEBI" id="CHEBI:57783"/>
    </ligand>
</feature>
<feature type="binding site" evidence="1">
    <location>
        <position position="125"/>
    </location>
    <ligand>
        <name>NADPH</name>
        <dbReference type="ChEBI" id="CHEBI:57783"/>
    </ligand>
</feature>
<feature type="binding site" evidence="1">
    <location>
        <position position="126"/>
    </location>
    <ligand>
        <name>1-deoxy-D-xylulose 5-phosphate</name>
        <dbReference type="ChEBI" id="CHEBI:57792"/>
    </ligand>
</feature>
<feature type="binding site" evidence="1">
    <location>
        <position position="127"/>
    </location>
    <ligand>
        <name>NADPH</name>
        <dbReference type="ChEBI" id="CHEBI:57783"/>
    </ligand>
</feature>
<feature type="binding site" evidence="1">
    <location>
        <position position="151"/>
    </location>
    <ligand>
        <name>Mn(2+)</name>
        <dbReference type="ChEBI" id="CHEBI:29035"/>
    </ligand>
</feature>
<feature type="binding site" evidence="1">
    <location>
        <position position="152"/>
    </location>
    <ligand>
        <name>1-deoxy-D-xylulose 5-phosphate</name>
        <dbReference type="ChEBI" id="CHEBI:57792"/>
    </ligand>
</feature>
<feature type="binding site" evidence="1">
    <location>
        <position position="153"/>
    </location>
    <ligand>
        <name>1-deoxy-D-xylulose 5-phosphate</name>
        <dbReference type="ChEBI" id="CHEBI:57792"/>
    </ligand>
</feature>
<feature type="binding site" evidence="1">
    <location>
        <position position="153"/>
    </location>
    <ligand>
        <name>Mn(2+)</name>
        <dbReference type="ChEBI" id="CHEBI:29035"/>
    </ligand>
</feature>
<feature type="binding site" evidence="1">
    <location>
        <position position="182"/>
    </location>
    <ligand>
        <name>1-deoxy-D-xylulose 5-phosphate</name>
        <dbReference type="ChEBI" id="CHEBI:57792"/>
    </ligand>
</feature>
<feature type="binding site" evidence="1">
    <location>
        <position position="205"/>
    </location>
    <ligand>
        <name>1-deoxy-D-xylulose 5-phosphate</name>
        <dbReference type="ChEBI" id="CHEBI:57792"/>
    </ligand>
</feature>
<feature type="binding site" evidence="1">
    <location>
        <position position="211"/>
    </location>
    <ligand>
        <name>NADPH</name>
        <dbReference type="ChEBI" id="CHEBI:57783"/>
    </ligand>
</feature>
<feature type="binding site" evidence="1">
    <location>
        <position position="218"/>
    </location>
    <ligand>
        <name>1-deoxy-D-xylulose 5-phosphate</name>
        <dbReference type="ChEBI" id="CHEBI:57792"/>
    </ligand>
</feature>
<feature type="binding site" evidence="1">
    <location>
        <position position="223"/>
    </location>
    <ligand>
        <name>1-deoxy-D-xylulose 5-phosphate</name>
        <dbReference type="ChEBI" id="CHEBI:57792"/>
    </ligand>
</feature>
<feature type="binding site" evidence="1">
    <location>
        <position position="224"/>
    </location>
    <ligand>
        <name>1-deoxy-D-xylulose 5-phosphate</name>
        <dbReference type="ChEBI" id="CHEBI:57792"/>
    </ligand>
</feature>
<feature type="binding site" evidence="1">
    <location>
        <position position="227"/>
    </location>
    <ligand>
        <name>1-deoxy-D-xylulose 5-phosphate</name>
        <dbReference type="ChEBI" id="CHEBI:57792"/>
    </ligand>
</feature>
<feature type="binding site" evidence="1">
    <location>
        <position position="227"/>
    </location>
    <ligand>
        <name>Mn(2+)</name>
        <dbReference type="ChEBI" id="CHEBI:29035"/>
    </ligand>
</feature>
<name>DXR_METFK</name>
<keyword id="KW-0414">Isoprene biosynthesis</keyword>
<keyword id="KW-0464">Manganese</keyword>
<keyword id="KW-0479">Metal-binding</keyword>
<keyword id="KW-0521">NADP</keyword>
<keyword id="KW-0560">Oxidoreductase</keyword>
<keyword id="KW-1185">Reference proteome</keyword>
<gene>
    <name evidence="1" type="primary">dxr</name>
    <name type="ordered locus">Mfla_1524</name>
</gene>
<comment type="function">
    <text evidence="1">Catalyzes the NADPH-dependent rearrangement and reduction of 1-deoxy-D-xylulose-5-phosphate (DXP) to 2-C-methyl-D-erythritol 4-phosphate (MEP).</text>
</comment>
<comment type="catalytic activity">
    <reaction evidence="1">
        <text>2-C-methyl-D-erythritol 4-phosphate + NADP(+) = 1-deoxy-D-xylulose 5-phosphate + NADPH + H(+)</text>
        <dbReference type="Rhea" id="RHEA:13717"/>
        <dbReference type="ChEBI" id="CHEBI:15378"/>
        <dbReference type="ChEBI" id="CHEBI:57783"/>
        <dbReference type="ChEBI" id="CHEBI:57792"/>
        <dbReference type="ChEBI" id="CHEBI:58262"/>
        <dbReference type="ChEBI" id="CHEBI:58349"/>
        <dbReference type="EC" id="1.1.1.267"/>
    </reaction>
    <physiologicalReaction direction="right-to-left" evidence="1">
        <dbReference type="Rhea" id="RHEA:13719"/>
    </physiologicalReaction>
</comment>
<comment type="cofactor">
    <cofactor evidence="1">
        <name>Mg(2+)</name>
        <dbReference type="ChEBI" id="CHEBI:18420"/>
    </cofactor>
    <cofactor evidence="1">
        <name>Mn(2+)</name>
        <dbReference type="ChEBI" id="CHEBI:29035"/>
    </cofactor>
</comment>
<comment type="pathway">
    <text evidence="1">Isoprenoid biosynthesis; isopentenyl diphosphate biosynthesis via DXP pathway; isopentenyl diphosphate from 1-deoxy-D-xylulose 5-phosphate: step 1/6.</text>
</comment>
<comment type="similarity">
    <text evidence="1">Belongs to the DXR family.</text>
</comment>
<reference key="1">
    <citation type="submission" date="2006-03" db="EMBL/GenBank/DDBJ databases">
        <title>Complete sequence of Methylobacillus flagellatus KT.</title>
        <authorList>
            <consortium name="US DOE Joint Genome Institute"/>
            <person name="Copeland A."/>
            <person name="Lucas S."/>
            <person name="Lapidus A."/>
            <person name="Barry K."/>
            <person name="Detter J.C."/>
            <person name="Glavina del Rio T."/>
            <person name="Hammon N."/>
            <person name="Israni S."/>
            <person name="Dalin E."/>
            <person name="Tice H."/>
            <person name="Pitluck S."/>
            <person name="Brettin T."/>
            <person name="Bruce D."/>
            <person name="Han C."/>
            <person name="Tapia R."/>
            <person name="Saunders E."/>
            <person name="Gilna P."/>
            <person name="Schmutz J."/>
            <person name="Larimer F."/>
            <person name="Land M."/>
            <person name="Kyrpides N."/>
            <person name="Anderson I."/>
            <person name="Richardson P."/>
        </authorList>
    </citation>
    <scope>NUCLEOTIDE SEQUENCE [LARGE SCALE GENOMIC DNA]</scope>
    <source>
        <strain>ATCC 51484 / DSM 6875 / VKM B-1610 / KT</strain>
    </source>
</reference>
<accession>Q1H145</accession>
<protein>
    <recommendedName>
        <fullName evidence="1">1-deoxy-D-xylulose 5-phosphate reductoisomerase</fullName>
        <shortName evidence="1">DXP reductoisomerase</shortName>
        <ecNumber evidence="1">1.1.1.267</ecNumber>
    </recommendedName>
    <alternativeName>
        <fullName evidence="1">1-deoxyxylulose-5-phosphate reductoisomerase</fullName>
    </alternativeName>
    <alternativeName>
        <fullName evidence="1">2-C-methyl-D-erythritol 4-phosphate synthase</fullName>
    </alternativeName>
</protein>
<proteinExistence type="inferred from homology"/>